<feature type="chain" id="PRO_0000421360" description="Sterol methyltransferase-like 3">
    <location>
        <begin position="1"/>
        <end position="392"/>
    </location>
</feature>
<feature type="transmembrane region" description="Helical" evidence="1">
    <location>
        <begin position="20"/>
        <end position="42"/>
    </location>
</feature>
<evidence type="ECO:0000255" key="1"/>
<evidence type="ECO:0000255" key="2">
    <source>
        <dbReference type="PROSITE-ProRule" id="PRU01022"/>
    </source>
</evidence>
<evidence type="ECO:0000269" key="3">
    <source>
    </source>
</evidence>
<evidence type="ECO:0000305" key="4"/>
<dbReference type="EC" id="2.1.1.-"/>
<dbReference type="EMBL" id="JN828967">
    <property type="protein sequence ID" value="AEY68261.1"/>
    <property type="molecule type" value="mRNA"/>
</dbReference>
<dbReference type="SMR" id="H2E7U0"/>
<dbReference type="GO" id="GO:0005783">
    <property type="term" value="C:endoplasmic reticulum"/>
    <property type="evidence" value="ECO:0007669"/>
    <property type="project" value="UniProtKB-KW"/>
</dbReference>
<dbReference type="GO" id="GO:0016020">
    <property type="term" value="C:membrane"/>
    <property type="evidence" value="ECO:0007669"/>
    <property type="project" value="UniProtKB-KW"/>
</dbReference>
<dbReference type="GO" id="GO:0003838">
    <property type="term" value="F:sterol 24-C-methyltransferase activity"/>
    <property type="evidence" value="ECO:0007669"/>
    <property type="project" value="TreeGrafter"/>
</dbReference>
<dbReference type="GO" id="GO:0032259">
    <property type="term" value="P:methylation"/>
    <property type="evidence" value="ECO:0007669"/>
    <property type="project" value="UniProtKB-KW"/>
</dbReference>
<dbReference type="GO" id="GO:0016126">
    <property type="term" value="P:sterol biosynthetic process"/>
    <property type="evidence" value="ECO:0007669"/>
    <property type="project" value="TreeGrafter"/>
</dbReference>
<dbReference type="CDD" id="cd02440">
    <property type="entry name" value="AdoMet_MTases"/>
    <property type="match status" value="1"/>
</dbReference>
<dbReference type="Gene3D" id="3.40.50.150">
    <property type="entry name" value="Vaccinia Virus protein VP39"/>
    <property type="match status" value="1"/>
</dbReference>
<dbReference type="InterPro" id="IPR050447">
    <property type="entry name" value="Erg6_SMT_methyltransf"/>
</dbReference>
<dbReference type="InterPro" id="IPR013216">
    <property type="entry name" value="Methyltransf_11"/>
</dbReference>
<dbReference type="InterPro" id="IPR030384">
    <property type="entry name" value="MeTrfase_SMT"/>
</dbReference>
<dbReference type="InterPro" id="IPR029063">
    <property type="entry name" value="SAM-dependent_MTases_sf"/>
</dbReference>
<dbReference type="InterPro" id="IPR013705">
    <property type="entry name" value="Sterol_MeTrfase_C"/>
</dbReference>
<dbReference type="PANTHER" id="PTHR44068:SF1">
    <property type="entry name" value="HYPOTHETICAL LOC100005854"/>
    <property type="match status" value="1"/>
</dbReference>
<dbReference type="PANTHER" id="PTHR44068">
    <property type="entry name" value="ZGC:194242"/>
    <property type="match status" value="1"/>
</dbReference>
<dbReference type="Pfam" id="PF08241">
    <property type="entry name" value="Methyltransf_11"/>
    <property type="match status" value="1"/>
</dbReference>
<dbReference type="Pfam" id="PF08498">
    <property type="entry name" value="Sterol_MT_C"/>
    <property type="match status" value="1"/>
</dbReference>
<dbReference type="SUPFAM" id="SSF53335">
    <property type="entry name" value="S-adenosyl-L-methionine-dependent methyltransferases"/>
    <property type="match status" value="1"/>
</dbReference>
<dbReference type="PROSITE" id="PS51685">
    <property type="entry name" value="SAM_MT_ERG6_SMT"/>
    <property type="match status" value="1"/>
</dbReference>
<organism>
    <name type="scientific">Botryococcus braunii</name>
    <name type="common">Green alga</name>
    <dbReference type="NCBI Taxonomy" id="38881"/>
    <lineage>
        <taxon>Eukaryota</taxon>
        <taxon>Viridiplantae</taxon>
        <taxon>Chlorophyta</taxon>
        <taxon>core chlorophytes</taxon>
        <taxon>Trebouxiophyceae</taxon>
        <taxon>Trebouxiophyceae incertae sedis</taxon>
        <taxon>Elliptochloris clade</taxon>
        <taxon>Botryococcus</taxon>
    </lineage>
</organism>
<proteinExistence type="evidence at transcript level"/>
<protein>
    <recommendedName>
        <fullName>Sterol methyltransferase-like 3</fullName>
        <ecNumber>2.1.1.-</ecNumber>
    </recommendedName>
</protein>
<reference key="1">
    <citation type="journal article" date="2012" name="J. Biol. Chem.">
        <title>Functional identification of triterpene methyltransferases from Botryococcus braunii race B.</title>
        <authorList>
            <person name="Niehaus T.D."/>
            <person name="Kinison S."/>
            <person name="Okada S."/>
            <person name="Yeo Y.S."/>
            <person name="Bell S.A."/>
            <person name="Cui P."/>
            <person name="Devarenne T.P."/>
            <person name="Chappell J."/>
        </authorList>
    </citation>
    <scope>NUCLEOTIDE SEQUENCE [MRNA]</scope>
    <scope>FUNCTION</scope>
</reference>
<gene>
    <name type="primary">SMT-3</name>
</gene>
<sequence length="392" mass="43903">MVSELVSMYVPPIVEAAKAVTPWQAAAGVTAAIFIGSYLWHSASLRKQRRTGTADGGLFSLTAGGIKKQDVTKLVDSFSQAYKTEDDGQLTCHHITREQSVEMVNTFYDLITDLYEWAWDTSFHFSCRPRWANFAQAQVLHEWRIANLANIQPGMKVLDVGTGVGNPGRTIASLSGAQVTGVTINAYQVKRALHHTRKAKLEDFYKPVQADFTDTPFEDDTFDAAFAIEATCHAPKLEQVYKEVYRVLKPGAYFALYDGVTKPNFDPKNERHVQLMNATVIGNGCPDMRTWKECEEIGKEVGFKLHMSYDAGEASRVLHPWWEKLDNFINTGFAWYGPASIKLLSKIGFLPRDFTKFIDIAAASVFSVKEAGELGIFTPMYVFVWQKPEKTA</sequence>
<keyword id="KW-0256">Endoplasmic reticulum</keyword>
<keyword id="KW-0444">Lipid biosynthesis</keyword>
<keyword id="KW-0443">Lipid metabolism</keyword>
<keyword id="KW-0472">Membrane</keyword>
<keyword id="KW-0489">Methyltransferase</keyword>
<keyword id="KW-0492">Microsome</keyword>
<keyword id="KW-0949">S-adenosyl-L-methionine</keyword>
<keyword id="KW-0808">Transferase</keyword>
<keyword id="KW-0812">Transmembrane</keyword>
<keyword id="KW-1133">Transmembrane helix</keyword>
<name>SMTL3_BOTBR</name>
<comment type="function">
    <text evidence="3">Unable to convert squalene, botryococcene, cycloartenol, zymosterol or lanosterol to mono-, di-, tri- or tetramethylated derivatives.</text>
</comment>
<comment type="subcellular location">
    <subcellularLocation>
        <location evidence="4">Microsome membrane</location>
        <topology evidence="4">Single-pass membrane protein</topology>
    </subcellularLocation>
</comment>
<comment type="similarity">
    <text evidence="2">Belongs to the class I-like SAM-binding methyltransferase superfamily. Erg6/SMT family.</text>
</comment>
<accession>H2E7U0</accession>